<reference key="1">
    <citation type="journal article" date="1999" name="J. Biol. Chem.">
        <title>METH-1, a human ortholog of ADAMTS-1, and METH-2 are members of a new family of proteins with angio-inhibitory activity.</title>
        <authorList>
            <person name="Vazquez F."/>
            <person name="Hastings G."/>
            <person name="Ortega M.-A."/>
            <person name="Lane T.F."/>
            <person name="Oikemus S."/>
            <person name="Lombardo M."/>
            <person name="Iruela-Arispe M.L."/>
        </authorList>
    </citation>
    <scope>NUCLEOTIDE SEQUENCE [MRNA]</scope>
    <source>
        <tissue>Lung</tissue>
    </source>
</reference>
<reference key="2">
    <citation type="journal article" date="2006" name="Nature">
        <title>Human chromosome 11 DNA sequence and analysis including novel gene identification.</title>
        <authorList>
            <person name="Taylor T.D."/>
            <person name="Noguchi H."/>
            <person name="Totoki Y."/>
            <person name="Toyoda A."/>
            <person name="Kuroki Y."/>
            <person name="Dewar K."/>
            <person name="Lloyd C."/>
            <person name="Itoh T."/>
            <person name="Takeda T."/>
            <person name="Kim D.-W."/>
            <person name="She X."/>
            <person name="Barlow K.F."/>
            <person name="Bloom T."/>
            <person name="Bruford E."/>
            <person name="Chang J.L."/>
            <person name="Cuomo C.A."/>
            <person name="Eichler E."/>
            <person name="FitzGerald M.G."/>
            <person name="Jaffe D.B."/>
            <person name="LaButti K."/>
            <person name="Nicol R."/>
            <person name="Park H.-S."/>
            <person name="Seaman C."/>
            <person name="Sougnez C."/>
            <person name="Yang X."/>
            <person name="Zimmer A.R."/>
            <person name="Zody M.C."/>
            <person name="Birren B.W."/>
            <person name="Nusbaum C."/>
            <person name="Fujiyama A."/>
            <person name="Hattori M."/>
            <person name="Rogers J."/>
            <person name="Lander E.S."/>
            <person name="Sakaki Y."/>
        </authorList>
    </citation>
    <scope>NUCLEOTIDE SEQUENCE [LARGE SCALE GENOMIC DNA]</scope>
</reference>
<reference key="3">
    <citation type="journal article" date="1999" name="Genomics">
        <title>ADAM-TS8, a novel metalloprotease of the ADAM-TS family located on mouse chromosome 9 and human chromosome 11.</title>
        <authorList>
            <person name="Georgiadis K.E."/>
            <person name="Hirohata S."/>
            <person name="Seldin M.F."/>
            <person name="Apte S.S."/>
        </authorList>
    </citation>
    <scope>NUCLEOTIDE SEQUENCE [MRNA] OF 194-439</scope>
</reference>
<accession>Q9UP79</accession>
<accession>Q9NZS0</accession>
<organism>
    <name type="scientific">Homo sapiens</name>
    <name type="common">Human</name>
    <dbReference type="NCBI Taxonomy" id="9606"/>
    <lineage>
        <taxon>Eukaryota</taxon>
        <taxon>Metazoa</taxon>
        <taxon>Chordata</taxon>
        <taxon>Craniata</taxon>
        <taxon>Vertebrata</taxon>
        <taxon>Euteleostomi</taxon>
        <taxon>Mammalia</taxon>
        <taxon>Eutheria</taxon>
        <taxon>Euarchontoglires</taxon>
        <taxon>Primates</taxon>
        <taxon>Haplorrhini</taxon>
        <taxon>Catarrhini</taxon>
        <taxon>Hominidae</taxon>
        <taxon>Homo</taxon>
    </lineage>
</organism>
<name>ATS8_HUMAN</name>
<sequence>MLPAPAAPRWPPLLLLLLLLLPLARGAPARPAAGGQASELVVPTRLPGSAGELALHLSAFGKGFVLRLAPDDSFLAPEFKIERLGGSGRATGGERGLRGCFFSGTVNGEPESLAAVSLCRGLSGSFLLDGEEFTIQPQGAGGSLAQPHRLQRWGPAGARPLPRGPEWEVETGEGQRQERGDHQEDSEEESQEEEAEGASEPPPPLGATSRTKRFVSEARFVETLLVADASMAAFYGADLQNHILTLMSVAARIYKHPSIKNSINLMVVKVLIVEDEKWGPEVSDNGGLTLRNFCNWQRRFNQPSDRHPEHYDTAILLTRQNFCGQEGLCDTLGVADIGTICDPNKSCSVIEDEGLQAAHTLAHELGHVLSMPHDDSKPCTRLFGPMGKHHVMAPLFVHLNQTLPWSPCSAMYLTELLDGGHGDCLLDAPAAALPLPTGLPGRMALYQLDQQCRQIFGPDFRHCPNTSAQDVCAQLWCHTDGAEPLCHTKNGSLPWADGTPCGPGHLCSEGSCLPEEEVERPKPVADGGWAPWGPWGECSRTCGGGVQFSHRECKDPEPQNGGRYCLGRRAKYQSCHTEECPPDGKSFREQQCEKYNAYNYTDMDGNLLQWVPKYAGVSPRDRCKLFCRARGRSEFKVFEAKVIDGTLCGPETLAICVRGQCVKAGCDHVVDSPRKLDKCGVCGGKGNSCRKVSGSLTPTNYGYNDIVTIPAGATNIDVKQRSHPGVQNDGNYLALKTADGQYLLNGNLAISAIEQDILVKGTILKYSGSIATLERLQSFRPLPEPLTVQLLTVPGEVFPPKVKYTFFVPNDVDFSMQSSKERATTNIIQPLLHAQWVLGDWSECSSTCGAGWQRRTVECRDPSGQASATCNKALKPEDAKPCESQLCPL</sequence>
<evidence type="ECO:0000250" key="1"/>
<evidence type="ECO:0000255" key="2"/>
<evidence type="ECO:0000255" key="3">
    <source>
        <dbReference type="PROSITE-ProRule" id="PRU00210"/>
    </source>
</evidence>
<evidence type="ECO:0000255" key="4">
    <source>
        <dbReference type="PROSITE-ProRule" id="PRU00276"/>
    </source>
</evidence>
<evidence type="ECO:0000255" key="5">
    <source>
        <dbReference type="PROSITE-ProRule" id="PRU10095"/>
    </source>
</evidence>
<evidence type="ECO:0000256" key="6">
    <source>
        <dbReference type="SAM" id="MobiDB-lite"/>
    </source>
</evidence>
<evidence type="ECO:0000305" key="7"/>
<proteinExistence type="evidence at protein level"/>
<keyword id="KW-0165">Cleavage on pair of basic residues</keyword>
<keyword id="KW-1015">Disulfide bond</keyword>
<keyword id="KW-0272">Extracellular matrix</keyword>
<keyword id="KW-0325">Glycoprotein</keyword>
<keyword id="KW-0358">Heparin-binding</keyword>
<keyword id="KW-0378">Hydrolase</keyword>
<keyword id="KW-0479">Metal-binding</keyword>
<keyword id="KW-0482">Metalloprotease</keyword>
<keyword id="KW-0645">Protease</keyword>
<keyword id="KW-1267">Proteomics identification</keyword>
<keyword id="KW-1185">Reference proteome</keyword>
<keyword id="KW-0677">Repeat</keyword>
<keyword id="KW-0964">Secreted</keyword>
<keyword id="KW-0732">Signal</keyword>
<keyword id="KW-0862">Zinc</keyword>
<keyword id="KW-0865">Zymogen</keyword>
<feature type="signal peptide" evidence="2">
    <location>
        <begin position="1"/>
        <end position="26"/>
    </location>
</feature>
<feature type="propeptide" id="PRO_0000029178" evidence="1">
    <location>
        <begin position="27"/>
        <end position="213"/>
    </location>
</feature>
<feature type="chain" id="PRO_0000029179" description="A disintegrin and metalloproteinase with thrombospondin motifs 8">
    <location>
        <begin position="214"/>
        <end position="889"/>
    </location>
</feature>
<feature type="domain" description="Peptidase M12B" evidence="4">
    <location>
        <begin position="219"/>
        <end position="429"/>
    </location>
</feature>
<feature type="domain" description="Disintegrin">
    <location>
        <begin position="438"/>
        <end position="525"/>
    </location>
</feature>
<feature type="domain" description="TSP type-1 1" evidence="3">
    <location>
        <begin position="526"/>
        <end position="581"/>
    </location>
</feature>
<feature type="domain" description="TSP type-1 2" evidence="3">
    <location>
        <begin position="833"/>
        <end position="888"/>
    </location>
</feature>
<feature type="region of interest" description="Disordered" evidence="6">
    <location>
        <begin position="138"/>
        <end position="210"/>
    </location>
</feature>
<feature type="region of interest" description="Spacer">
    <location>
        <begin position="690"/>
        <end position="831"/>
    </location>
</feature>
<feature type="compositionally biased region" description="Basic and acidic residues" evidence="6">
    <location>
        <begin position="173"/>
        <end position="183"/>
    </location>
</feature>
<feature type="compositionally biased region" description="Acidic residues" evidence="6">
    <location>
        <begin position="184"/>
        <end position="197"/>
    </location>
</feature>
<feature type="active site" evidence="4 5">
    <location>
        <position position="364"/>
    </location>
</feature>
<feature type="binding site" evidence="1">
    <location>
        <position position="363"/>
    </location>
    <ligand>
        <name>Zn(2+)</name>
        <dbReference type="ChEBI" id="CHEBI:29105"/>
        <note>catalytic</note>
    </ligand>
</feature>
<feature type="binding site" evidence="1">
    <location>
        <position position="367"/>
    </location>
    <ligand>
        <name>Zn(2+)</name>
        <dbReference type="ChEBI" id="CHEBI:29105"/>
        <note>catalytic</note>
    </ligand>
</feature>
<feature type="binding site" evidence="1">
    <location>
        <position position="373"/>
    </location>
    <ligand>
        <name>Zn(2+)</name>
        <dbReference type="ChEBI" id="CHEBI:29105"/>
        <note>catalytic</note>
    </ligand>
</feature>
<feature type="glycosylation site" description="N-linked (GlcNAc...) asparagine" evidence="2">
    <location>
        <position position="344"/>
    </location>
</feature>
<feature type="glycosylation site" description="N-linked (GlcNAc...) asparagine" evidence="2">
    <location>
        <position position="400"/>
    </location>
</feature>
<feature type="glycosylation site" description="N-linked (GlcNAc...) asparagine" evidence="2">
    <location>
        <position position="465"/>
    </location>
</feature>
<feature type="glycosylation site" description="N-linked (GlcNAc...) asparagine" evidence="2">
    <location>
        <position position="490"/>
    </location>
</feature>
<feature type="glycosylation site" description="N-linked (GlcNAc...) asparagine" evidence="2">
    <location>
        <position position="599"/>
    </location>
</feature>
<feature type="disulfide bond" evidence="1">
    <location>
        <begin position="294"/>
        <end position="347"/>
    </location>
</feature>
<feature type="disulfide bond" evidence="1">
    <location>
        <begin position="323"/>
        <end position="329"/>
    </location>
</feature>
<feature type="disulfide bond" evidence="1">
    <location>
        <begin position="341"/>
        <end position="424"/>
    </location>
</feature>
<feature type="disulfide bond" evidence="1">
    <location>
        <begin position="379"/>
        <end position="408"/>
    </location>
</feature>
<feature type="disulfide bond" evidence="1">
    <location>
        <begin position="452"/>
        <end position="477"/>
    </location>
</feature>
<feature type="disulfide bond" evidence="1">
    <location>
        <begin position="463"/>
        <end position="486"/>
    </location>
</feature>
<feature type="disulfide bond" evidence="1">
    <location>
        <begin position="472"/>
        <end position="507"/>
    </location>
</feature>
<feature type="disulfide bond" evidence="1">
    <location>
        <begin position="501"/>
        <end position="512"/>
    </location>
</feature>
<feature type="disulfide bond" evidence="1">
    <location>
        <begin position="538"/>
        <end position="575"/>
    </location>
</feature>
<feature type="disulfide bond" evidence="1">
    <location>
        <begin position="542"/>
        <end position="580"/>
    </location>
</feature>
<feature type="disulfide bond" evidence="1">
    <location>
        <begin position="553"/>
        <end position="565"/>
    </location>
</feature>
<feature type="sequence conflict" description="In Ref. 1; AAD48081." evidence="7" ref="1">
    <original>L</original>
    <variation>F</variation>
    <location>
        <position position="2"/>
    </location>
</feature>
<feature type="sequence conflict" description="In Ref. 1; AAD48081." evidence="7" ref="1">
    <original>PP</original>
    <variation>LPF</variation>
    <location>
        <begin position="11"/>
        <end position="12"/>
    </location>
</feature>
<feature type="sequence conflict" description="In Ref. 3; AAF25806." evidence="7" ref="3">
    <original>E</original>
    <variation>R</variation>
    <location>
        <position position="194"/>
    </location>
</feature>
<feature type="sequence conflict" description="In Ref. 3; AAF25806." evidence="7" ref="3">
    <original>YLTELLDGGHGDCLLDAPAAALPLPTGL</original>
    <variation>FSGCHLQGWIHFKYLCKCVSELKCDLMP</variation>
    <location>
        <begin position="412"/>
        <end position="439"/>
    </location>
</feature>
<feature type="sequence conflict" description="In Ref. 1; AAD48081." evidence="7" ref="1">
    <original>A</original>
    <variation>G</variation>
    <location>
        <position position="430"/>
    </location>
</feature>
<feature type="sequence conflict" description="In Ref. 1; AAD48081." evidence="7" ref="1">
    <original>A</original>
    <variation>V</variation>
    <location>
        <position position="525"/>
    </location>
</feature>
<protein>
    <recommendedName>
        <fullName>A disintegrin and metalloproteinase with thrombospondin motifs 8</fullName>
        <shortName>ADAM-TS 8</shortName>
        <shortName>ADAM-TS8</shortName>
        <shortName>ADAMTS-8</shortName>
        <ecNumber>3.4.24.-</ecNumber>
    </recommendedName>
    <alternativeName>
        <fullName>METH-2</fullName>
    </alternativeName>
    <alternativeName>
        <fullName>METH-8</fullName>
    </alternativeName>
</protein>
<gene>
    <name type="primary">ADAMTS8</name>
    <name type="synonym">METH2</name>
</gene>
<comment type="function">
    <text>Has anti-angiogenic properties.</text>
</comment>
<comment type="cofactor">
    <cofactor evidence="1">
        <name>Zn(2+)</name>
        <dbReference type="ChEBI" id="CHEBI:29105"/>
    </cofactor>
    <text evidence="1">Binds 1 zinc ion per subunit.</text>
</comment>
<comment type="subcellular location">
    <subcellularLocation>
        <location evidence="1">Secreted</location>
        <location evidence="1">Extracellular space</location>
        <location evidence="1">Extracellular matrix</location>
    </subcellularLocation>
</comment>
<comment type="tissue specificity">
    <text>Highly expressed in adult and fetal lung, lower expression in brain, placenta, heart, stomach and fetal brain and kidney.</text>
</comment>
<comment type="domain">
    <text>The spacer domain and the TSP type-1 domains are important for a tight interaction with the extracellular matrix.</text>
</comment>
<comment type="PTM">
    <text evidence="1">The precursor is cleaved by a furin endopeptidase.</text>
</comment>
<comment type="PTM">
    <text evidence="1">Glycosylated. Can be O-fucosylated by POFUT2 on a serine or a threonine residue found within the consensus sequence C1-X(2)-(S/T)-C2-G of the TSP type-1 repeat domains where C1 and C2 are the first and second cysteine residue of the repeat, respectively. Fucosylated repeats can then be further glycosylated by the addition of a beta-1,3-glucose residue by the glucosyltransferase, B3GALTL. Fucosylation mediates the efficient secretion of ADAMTS family members. Can also be C-glycosylated with one or two mannose molecules on tryptophan residues within the consensus sequence W-X-X-W of the TPRs, and N-glycosylated. These other glycosylations can also facilitate secretion (By similarity).</text>
</comment>
<dbReference type="EC" id="3.4.24.-"/>
<dbReference type="EMBL" id="AF060153">
    <property type="protein sequence ID" value="AAD48081.1"/>
    <property type="molecule type" value="mRNA"/>
</dbReference>
<dbReference type="EMBL" id="AP002986">
    <property type="status" value="NOT_ANNOTATED_CDS"/>
    <property type="molecule type" value="Genomic_DNA"/>
</dbReference>
<dbReference type="EMBL" id="AF175283">
    <property type="protein sequence ID" value="AAF25806.1"/>
    <property type="molecule type" value="mRNA"/>
</dbReference>
<dbReference type="CCDS" id="CCDS41732.1"/>
<dbReference type="RefSeq" id="NP_008968.4">
    <property type="nucleotide sequence ID" value="NM_007037.5"/>
</dbReference>
<dbReference type="SMR" id="Q9UP79"/>
<dbReference type="BioGRID" id="116276">
    <property type="interactions" value="3"/>
</dbReference>
<dbReference type="FunCoup" id="Q9UP79">
    <property type="interactions" value="13"/>
</dbReference>
<dbReference type="IntAct" id="Q9UP79">
    <property type="interactions" value="1"/>
</dbReference>
<dbReference type="STRING" id="9606.ENSP00000257359"/>
<dbReference type="MEROPS" id="M12.226"/>
<dbReference type="GlyCosmos" id="Q9UP79">
    <property type="glycosylation" value="5 sites, No reported glycans"/>
</dbReference>
<dbReference type="GlyGen" id="Q9UP79">
    <property type="glycosylation" value="6 sites, 1 O-linked glycan (1 site)"/>
</dbReference>
<dbReference type="iPTMnet" id="Q9UP79"/>
<dbReference type="PhosphoSitePlus" id="Q9UP79"/>
<dbReference type="BioMuta" id="ADAMTS8"/>
<dbReference type="DMDM" id="313104077"/>
<dbReference type="MassIVE" id="Q9UP79"/>
<dbReference type="PaxDb" id="9606-ENSP00000257359"/>
<dbReference type="PeptideAtlas" id="Q9UP79"/>
<dbReference type="ProteomicsDB" id="85356"/>
<dbReference type="Antibodypedia" id="33104">
    <property type="antibodies" value="213 antibodies from 25 providers"/>
</dbReference>
<dbReference type="DNASU" id="11095"/>
<dbReference type="Ensembl" id="ENST00000257359.7">
    <property type="protein sequence ID" value="ENSP00000257359.6"/>
    <property type="gene ID" value="ENSG00000134917.10"/>
</dbReference>
<dbReference type="GeneID" id="11095"/>
<dbReference type="KEGG" id="hsa:11095"/>
<dbReference type="MANE-Select" id="ENST00000257359.7">
    <property type="protein sequence ID" value="ENSP00000257359.6"/>
    <property type="RefSeq nucleotide sequence ID" value="NM_007037.6"/>
    <property type="RefSeq protein sequence ID" value="NP_008968.4"/>
</dbReference>
<dbReference type="UCSC" id="uc001qgg.5">
    <property type="organism name" value="human"/>
</dbReference>
<dbReference type="AGR" id="HGNC:224"/>
<dbReference type="CTD" id="11095"/>
<dbReference type="DisGeNET" id="11095"/>
<dbReference type="GeneCards" id="ADAMTS8"/>
<dbReference type="HGNC" id="HGNC:224">
    <property type="gene designation" value="ADAMTS8"/>
</dbReference>
<dbReference type="HPA" id="ENSG00000134917">
    <property type="expression patterns" value="Tissue enhanced (lung)"/>
</dbReference>
<dbReference type="MIM" id="605175">
    <property type="type" value="gene"/>
</dbReference>
<dbReference type="neXtProt" id="NX_Q9UP79"/>
<dbReference type="OpenTargets" id="ENSG00000134917"/>
<dbReference type="VEuPathDB" id="HostDB:ENSG00000134917"/>
<dbReference type="eggNOG" id="KOG3538">
    <property type="taxonomic scope" value="Eukaryota"/>
</dbReference>
<dbReference type="GeneTree" id="ENSGT00940000159642"/>
<dbReference type="HOGENOM" id="CLU_000660_3_0_1"/>
<dbReference type="InParanoid" id="Q9UP79"/>
<dbReference type="OMA" id="FFIPKDI"/>
<dbReference type="OrthoDB" id="412680at2759"/>
<dbReference type="PAN-GO" id="Q9UP79">
    <property type="GO annotations" value="3 GO annotations based on evolutionary models"/>
</dbReference>
<dbReference type="PhylomeDB" id="Q9UP79"/>
<dbReference type="TreeFam" id="TF331949"/>
<dbReference type="PathwayCommons" id="Q9UP79"/>
<dbReference type="Reactome" id="R-HSA-1474228">
    <property type="pathway name" value="Degradation of the extracellular matrix"/>
</dbReference>
<dbReference type="Reactome" id="R-HSA-5083635">
    <property type="pathway name" value="Defective B3GALTL causes PpS"/>
</dbReference>
<dbReference type="Reactome" id="R-HSA-5173214">
    <property type="pathway name" value="O-glycosylation of TSR domain-containing proteins"/>
</dbReference>
<dbReference type="BioGRID-ORCS" id="11095">
    <property type="hits" value="9 hits in 1142 CRISPR screens"/>
</dbReference>
<dbReference type="ChiTaRS" id="ADAMTS8">
    <property type="organism name" value="human"/>
</dbReference>
<dbReference type="GeneWiki" id="ADAMTS8"/>
<dbReference type="GenomeRNAi" id="11095"/>
<dbReference type="Pharos" id="Q9UP79">
    <property type="development level" value="Tbio"/>
</dbReference>
<dbReference type="PRO" id="PR:Q9UP79"/>
<dbReference type="Proteomes" id="UP000005640">
    <property type="component" value="Chromosome 11"/>
</dbReference>
<dbReference type="RNAct" id="Q9UP79">
    <property type="molecule type" value="protein"/>
</dbReference>
<dbReference type="Bgee" id="ENSG00000134917">
    <property type="expression patterns" value="Expressed in middle temporal gyrus and 136 other cell types or tissues"/>
</dbReference>
<dbReference type="GO" id="GO:0031012">
    <property type="term" value="C:extracellular matrix"/>
    <property type="evidence" value="ECO:0000318"/>
    <property type="project" value="GO_Central"/>
</dbReference>
<dbReference type="GO" id="GO:0005576">
    <property type="term" value="C:extracellular region"/>
    <property type="evidence" value="ECO:0007669"/>
    <property type="project" value="UniProtKB-KW"/>
</dbReference>
<dbReference type="GO" id="GO:0008201">
    <property type="term" value="F:heparin binding"/>
    <property type="evidence" value="ECO:0007669"/>
    <property type="project" value="UniProtKB-KW"/>
</dbReference>
<dbReference type="GO" id="GO:0005178">
    <property type="term" value="F:integrin binding"/>
    <property type="evidence" value="ECO:0000304"/>
    <property type="project" value="ProtInc"/>
</dbReference>
<dbReference type="GO" id="GO:0009673">
    <property type="term" value="F:low-affinity phosphate transmembrane transporter activity"/>
    <property type="evidence" value="ECO:0000304"/>
    <property type="project" value="ProtInc"/>
</dbReference>
<dbReference type="GO" id="GO:0004222">
    <property type="term" value="F:metalloendopeptidase activity"/>
    <property type="evidence" value="ECO:0000318"/>
    <property type="project" value="GO_Central"/>
</dbReference>
<dbReference type="GO" id="GO:0008237">
    <property type="term" value="F:metallopeptidase activity"/>
    <property type="evidence" value="ECO:0000304"/>
    <property type="project" value="ProtInc"/>
</dbReference>
<dbReference type="GO" id="GO:0008270">
    <property type="term" value="F:zinc ion binding"/>
    <property type="evidence" value="ECO:0007669"/>
    <property type="project" value="InterPro"/>
</dbReference>
<dbReference type="GO" id="GO:0030198">
    <property type="term" value="P:extracellular matrix organization"/>
    <property type="evidence" value="ECO:0000318"/>
    <property type="project" value="GO_Central"/>
</dbReference>
<dbReference type="GO" id="GO:0008285">
    <property type="term" value="P:negative regulation of cell population proliferation"/>
    <property type="evidence" value="ECO:0000304"/>
    <property type="project" value="ProtInc"/>
</dbReference>
<dbReference type="GO" id="GO:0006508">
    <property type="term" value="P:proteolysis"/>
    <property type="evidence" value="ECO:0000318"/>
    <property type="project" value="GO_Central"/>
</dbReference>
<dbReference type="CDD" id="cd04273">
    <property type="entry name" value="ZnMc_ADAMTS_like"/>
    <property type="match status" value="1"/>
</dbReference>
<dbReference type="FunFam" id="2.20.100.10:FF:000006">
    <property type="entry name" value="A disintegrin and metalloproteinase with thrombospondin motifs 1"/>
    <property type="match status" value="1"/>
</dbReference>
<dbReference type="FunFam" id="2.60.120.830:FF:000001">
    <property type="entry name" value="A disintegrin and metalloproteinase with thrombospondin motifs 1"/>
    <property type="match status" value="1"/>
</dbReference>
<dbReference type="FunFam" id="3.40.390.10:FF:000001">
    <property type="entry name" value="A disintegrin and metalloproteinase with thrombospondin motifs 1"/>
    <property type="match status" value="1"/>
</dbReference>
<dbReference type="FunFam" id="2.20.100.10:FF:000048">
    <property type="entry name" value="ADAM metallopeptidase with thrombospondin type 1 motif 8"/>
    <property type="match status" value="1"/>
</dbReference>
<dbReference type="Gene3D" id="2.60.120.830">
    <property type="match status" value="1"/>
</dbReference>
<dbReference type="Gene3D" id="3.40.1620.60">
    <property type="match status" value="2"/>
</dbReference>
<dbReference type="Gene3D" id="3.40.390.10">
    <property type="entry name" value="Collagenase (Catalytic Domain)"/>
    <property type="match status" value="1"/>
</dbReference>
<dbReference type="Gene3D" id="2.20.100.10">
    <property type="entry name" value="Thrombospondin type-1 (TSP1) repeat"/>
    <property type="match status" value="2"/>
</dbReference>
<dbReference type="InterPro" id="IPR006586">
    <property type="entry name" value="ADAM_Cys-rich"/>
</dbReference>
<dbReference type="InterPro" id="IPR013273">
    <property type="entry name" value="ADAMTS/ADAMTS-like"/>
</dbReference>
<dbReference type="InterPro" id="IPR050439">
    <property type="entry name" value="ADAMTS_ADAMTS-like"/>
</dbReference>
<dbReference type="InterPro" id="IPR041645">
    <property type="entry name" value="ADAMTS_CR_2"/>
</dbReference>
<dbReference type="InterPro" id="IPR045371">
    <property type="entry name" value="ADAMTS_CR_3"/>
</dbReference>
<dbReference type="InterPro" id="IPR010294">
    <property type="entry name" value="ADAMTS_spacer1"/>
</dbReference>
<dbReference type="InterPro" id="IPR024079">
    <property type="entry name" value="MetalloPept_cat_dom_sf"/>
</dbReference>
<dbReference type="InterPro" id="IPR013277">
    <property type="entry name" value="Pept_M12B_ADAM-TS8"/>
</dbReference>
<dbReference type="InterPro" id="IPR001590">
    <property type="entry name" value="Peptidase_M12B"/>
</dbReference>
<dbReference type="InterPro" id="IPR002870">
    <property type="entry name" value="Peptidase_M12B_N"/>
</dbReference>
<dbReference type="InterPro" id="IPR000884">
    <property type="entry name" value="TSP1_rpt"/>
</dbReference>
<dbReference type="InterPro" id="IPR036383">
    <property type="entry name" value="TSP1_rpt_sf"/>
</dbReference>
<dbReference type="PANTHER" id="PTHR13723:SF41">
    <property type="entry name" value="A DISINTEGRIN AND METALLOPROTEINASE WITH THROMBOSPONDIN MOTIFS 8"/>
    <property type="match status" value="1"/>
</dbReference>
<dbReference type="PANTHER" id="PTHR13723">
    <property type="entry name" value="ADAMTS A DISINTEGRIN AND METALLOPROTEASE WITH THROMBOSPONDIN MOTIFS PROTEASE"/>
    <property type="match status" value="1"/>
</dbReference>
<dbReference type="Pfam" id="PF17771">
    <property type="entry name" value="ADAMTS_CR_2"/>
    <property type="match status" value="1"/>
</dbReference>
<dbReference type="Pfam" id="PF19236">
    <property type="entry name" value="ADAMTS_CR_3"/>
    <property type="match status" value="1"/>
</dbReference>
<dbReference type="Pfam" id="PF05986">
    <property type="entry name" value="ADAMTS_spacer1"/>
    <property type="match status" value="1"/>
</dbReference>
<dbReference type="Pfam" id="PF01562">
    <property type="entry name" value="Pep_M12B_propep"/>
    <property type="match status" value="1"/>
</dbReference>
<dbReference type="Pfam" id="PF01421">
    <property type="entry name" value="Reprolysin"/>
    <property type="match status" value="1"/>
</dbReference>
<dbReference type="Pfam" id="PF19030">
    <property type="entry name" value="TSP1_ADAMTS"/>
    <property type="match status" value="1"/>
</dbReference>
<dbReference type="Pfam" id="PF00090">
    <property type="entry name" value="TSP_1"/>
    <property type="match status" value="1"/>
</dbReference>
<dbReference type="PRINTS" id="PR01861">
    <property type="entry name" value="ADAMTS8"/>
</dbReference>
<dbReference type="PRINTS" id="PR01857">
    <property type="entry name" value="ADAMTSFAMILY"/>
</dbReference>
<dbReference type="SMART" id="SM00608">
    <property type="entry name" value="ACR"/>
    <property type="match status" value="1"/>
</dbReference>
<dbReference type="SMART" id="SM00209">
    <property type="entry name" value="TSP1"/>
    <property type="match status" value="2"/>
</dbReference>
<dbReference type="SUPFAM" id="SSF55486">
    <property type="entry name" value="Metalloproteases ('zincins'), catalytic domain"/>
    <property type="match status" value="1"/>
</dbReference>
<dbReference type="SUPFAM" id="SSF82895">
    <property type="entry name" value="TSP-1 type 1 repeat"/>
    <property type="match status" value="2"/>
</dbReference>
<dbReference type="PROSITE" id="PS50215">
    <property type="entry name" value="ADAM_MEPRO"/>
    <property type="match status" value="1"/>
</dbReference>
<dbReference type="PROSITE" id="PS50092">
    <property type="entry name" value="TSP1"/>
    <property type="match status" value="2"/>
</dbReference>
<dbReference type="PROSITE" id="PS00142">
    <property type="entry name" value="ZINC_PROTEASE"/>
    <property type="match status" value="1"/>
</dbReference>